<protein>
    <recommendedName>
        <fullName>Nik-related protein kinase</fullName>
        <ecNumber>2.7.11.1</ecNumber>
    </recommendedName>
    <alternativeName>
        <fullName>Nck-interacting kinase-like embryo specific kinase</fullName>
        <shortName>NESK</shortName>
        <shortName>NIK-like embryo-specific kinase</shortName>
    </alternativeName>
</protein>
<comment type="function">
    <text evidence="8 9">May phosphorylate cofilin-1 and induce actin polymerization through this process, during the late stages of embryogenesis. Involved in the TNF-alpha-induced signaling pathway.</text>
</comment>
<comment type="catalytic activity">
    <reaction>
        <text>L-seryl-[protein] + ATP = O-phospho-L-seryl-[protein] + ADP + H(+)</text>
        <dbReference type="Rhea" id="RHEA:17989"/>
        <dbReference type="Rhea" id="RHEA-COMP:9863"/>
        <dbReference type="Rhea" id="RHEA-COMP:11604"/>
        <dbReference type="ChEBI" id="CHEBI:15378"/>
        <dbReference type="ChEBI" id="CHEBI:29999"/>
        <dbReference type="ChEBI" id="CHEBI:30616"/>
        <dbReference type="ChEBI" id="CHEBI:83421"/>
        <dbReference type="ChEBI" id="CHEBI:456216"/>
        <dbReference type="EC" id="2.7.11.1"/>
    </reaction>
</comment>
<comment type="catalytic activity">
    <reaction>
        <text>L-threonyl-[protein] + ATP = O-phospho-L-threonyl-[protein] + ADP + H(+)</text>
        <dbReference type="Rhea" id="RHEA:46608"/>
        <dbReference type="Rhea" id="RHEA-COMP:11060"/>
        <dbReference type="Rhea" id="RHEA-COMP:11605"/>
        <dbReference type="ChEBI" id="CHEBI:15378"/>
        <dbReference type="ChEBI" id="CHEBI:30013"/>
        <dbReference type="ChEBI" id="CHEBI:30616"/>
        <dbReference type="ChEBI" id="CHEBI:61977"/>
        <dbReference type="ChEBI" id="CHEBI:456216"/>
        <dbReference type="EC" id="2.7.11.1"/>
    </reaction>
</comment>
<comment type="developmental stage">
    <text evidence="7 8 9">Predominantly expressed in skeletal muscle during embryogenesis. Expression was detected in the myotome at 10.5 dpc and, thereafter, was observed in developing skeletal musculature from 11.5 to 13.5 dpc and increased from 15 to 17 dpc. However, expression in skeletal muscle was not observed in adults. Its expression may be down-regulated as development proceeds.</text>
</comment>
<comment type="similarity">
    <text evidence="10">Belongs to the protein kinase superfamily. STE Ser/Thr protein kinase family. STE20 subfamily.</text>
</comment>
<comment type="sequence caution" evidence="10">
    <conflict type="miscellaneous discrepancy">
        <sequence resource="EMBL-CDS" id="AAH68311"/>
    </conflict>
    <text>Contaminating sequence. Potential poly-A sequence.</text>
</comment>
<evidence type="ECO:0000250" key="1">
    <source>
        <dbReference type="UniProtKB" id="Q7Z2Y5"/>
    </source>
</evidence>
<evidence type="ECO:0000255" key="2"/>
<evidence type="ECO:0000255" key="3">
    <source>
        <dbReference type="PROSITE-ProRule" id="PRU00159"/>
    </source>
</evidence>
<evidence type="ECO:0000255" key="4">
    <source>
        <dbReference type="PROSITE-ProRule" id="PRU00795"/>
    </source>
</evidence>
<evidence type="ECO:0000255" key="5">
    <source>
        <dbReference type="PROSITE-ProRule" id="PRU10027"/>
    </source>
</evidence>
<evidence type="ECO:0000256" key="6">
    <source>
        <dbReference type="SAM" id="MobiDB-lite"/>
    </source>
</evidence>
<evidence type="ECO:0000269" key="7">
    <source>
    </source>
</evidence>
<evidence type="ECO:0000269" key="8">
    <source>
    </source>
</evidence>
<evidence type="ECO:0000269" key="9">
    <source>
    </source>
</evidence>
<evidence type="ECO:0000305" key="10"/>
<evidence type="ECO:0007744" key="11">
    <source>
    </source>
</evidence>
<proteinExistence type="evidence at protein level"/>
<organism>
    <name type="scientific">Mus musculus</name>
    <name type="common">Mouse</name>
    <dbReference type="NCBI Taxonomy" id="10090"/>
    <lineage>
        <taxon>Eukaryota</taxon>
        <taxon>Metazoa</taxon>
        <taxon>Chordata</taxon>
        <taxon>Craniata</taxon>
        <taxon>Vertebrata</taxon>
        <taxon>Euteleostomi</taxon>
        <taxon>Mammalia</taxon>
        <taxon>Eutheria</taxon>
        <taxon>Euarchontoglires</taxon>
        <taxon>Glires</taxon>
        <taxon>Rodentia</taxon>
        <taxon>Myomorpha</taxon>
        <taxon>Muroidea</taxon>
        <taxon>Muridae</taxon>
        <taxon>Murinae</taxon>
        <taxon>Mus</taxon>
        <taxon>Mus</taxon>
    </lineage>
</organism>
<dbReference type="EC" id="2.7.11.1"/>
<dbReference type="EMBL" id="AB020741">
    <property type="protein sequence ID" value="BAA84943.1"/>
    <property type="molecule type" value="mRNA"/>
</dbReference>
<dbReference type="EMBL" id="AB035267">
    <property type="protein sequence ID" value="BAA87066.1"/>
    <property type="molecule type" value="mRNA"/>
</dbReference>
<dbReference type="EMBL" id="BC139029">
    <property type="protein sequence ID" value="AAI39030.1"/>
    <property type="molecule type" value="mRNA"/>
</dbReference>
<dbReference type="EMBL" id="BC139031">
    <property type="protein sequence ID" value="AAI39032.1"/>
    <property type="molecule type" value="mRNA"/>
</dbReference>
<dbReference type="EMBL" id="BC068311">
    <property type="protein sequence ID" value="AAH68311.1"/>
    <property type="status" value="ALT_SEQ"/>
    <property type="molecule type" value="mRNA"/>
</dbReference>
<dbReference type="EMBL" id="AK041377">
    <property type="protein sequence ID" value="BAC30923.1"/>
    <property type="molecule type" value="mRNA"/>
</dbReference>
<dbReference type="CCDS" id="CCDS41143.1"/>
<dbReference type="RefSeq" id="NP_038752.2">
    <property type="nucleotide sequence ID" value="NM_013724.2"/>
</dbReference>
<dbReference type="SMR" id="Q9R0G8"/>
<dbReference type="BioGRID" id="205128">
    <property type="interactions" value="7"/>
</dbReference>
<dbReference type="FunCoup" id="Q9R0G8">
    <property type="interactions" value="15"/>
</dbReference>
<dbReference type="STRING" id="10090.ENSMUSP00000063397"/>
<dbReference type="GlyGen" id="Q9R0G8">
    <property type="glycosylation" value="2 sites, 1 O-linked glycan (2 sites)"/>
</dbReference>
<dbReference type="iPTMnet" id="Q9R0G8"/>
<dbReference type="PhosphoSitePlus" id="Q9R0G8"/>
<dbReference type="PaxDb" id="10090-ENSMUSP00000108675"/>
<dbReference type="ProteomicsDB" id="293896"/>
<dbReference type="Antibodypedia" id="2074">
    <property type="antibodies" value="67 antibodies from 20 providers"/>
</dbReference>
<dbReference type="DNASU" id="27206"/>
<dbReference type="Ensembl" id="ENSMUST00000064937.14">
    <property type="protein sequence ID" value="ENSMUSP00000063397.8"/>
    <property type="gene ID" value="ENSMUSG00000052854.16"/>
</dbReference>
<dbReference type="GeneID" id="27206"/>
<dbReference type="KEGG" id="mmu:27206"/>
<dbReference type="UCSC" id="uc009ujx.2">
    <property type="organism name" value="mouse"/>
</dbReference>
<dbReference type="AGR" id="MGI:1351326"/>
<dbReference type="CTD" id="203447"/>
<dbReference type="MGI" id="MGI:1351326">
    <property type="gene designation" value="Nrk"/>
</dbReference>
<dbReference type="VEuPathDB" id="HostDB:ENSMUSG00000052854"/>
<dbReference type="eggNOG" id="KOG0587">
    <property type="taxonomic scope" value="Eukaryota"/>
</dbReference>
<dbReference type="GeneTree" id="ENSGT00940000161533"/>
<dbReference type="HOGENOM" id="CLU_001831_2_0_1"/>
<dbReference type="InParanoid" id="Q9R0G8"/>
<dbReference type="OMA" id="AIKVICI"/>
<dbReference type="OrthoDB" id="8693905at2759"/>
<dbReference type="TreeFam" id="TF105138"/>
<dbReference type="BioGRID-ORCS" id="27206">
    <property type="hits" value="1 hit in 79 CRISPR screens"/>
</dbReference>
<dbReference type="ChiTaRS" id="Nrk">
    <property type="organism name" value="mouse"/>
</dbReference>
<dbReference type="PRO" id="PR:Q9R0G8"/>
<dbReference type="Proteomes" id="UP000000589">
    <property type="component" value="Chromosome X"/>
</dbReference>
<dbReference type="RNAct" id="Q9R0G8">
    <property type="molecule type" value="protein"/>
</dbReference>
<dbReference type="Bgee" id="ENSMUSG00000052854">
    <property type="expression patterns" value="Expressed in late embryo and 159 other cell types or tissues"/>
</dbReference>
<dbReference type="ExpressionAtlas" id="Q9R0G8">
    <property type="expression patterns" value="baseline and differential"/>
</dbReference>
<dbReference type="GO" id="GO:0005524">
    <property type="term" value="F:ATP binding"/>
    <property type="evidence" value="ECO:0007669"/>
    <property type="project" value="UniProtKB-KW"/>
</dbReference>
<dbReference type="GO" id="GO:0004672">
    <property type="term" value="F:protein kinase activity"/>
    <property type="evidence" value="ECO:0000314"/>
    <property type="project" value="MGI"/>
</dbReference>
<dbReference type="GO" id="GO:0106310">
    <property type="term" value="F:protein serine kinase activity"/>
    <property type="evidence" value="ECO:0007669"/>
    <property type="project" value="RHEA"/>
</dbReference>
<dbReference type="GO" id="GO:0004674">
    <property type="term" value="F:protein serine/threonine kinase activity"/>
    <property type="evidence" value="ECO:0007669"/>
    <property type="project" value="UniProtKB-KW"/>
</dbReference>
<dbReference type="GO" id="GO:0008285">
    <property type="term" value="P:negative regulation of cell population proliferation"/>
    <property type="evidence" value="ECO:0000315"/>
    <property type="project" value="MGI"/>
</dbReference>
<dbReference type="GO" id="GO:0007567">
    <property type="term" value="P:parturition"/>
    <property type="evidence" value="ECO:0000315"/>
    <property type="project" value="MGI"/>
</dbReference>
<dbReference type="GO" id="GO:0046330">
    <property type="term" value="P:positive regulation of JNK cascade"/>
    <property type="evidence" value="ECO:0000314"/>
    <property type="project" value="MGI"/>
</dbReference>
<dbReference type="GO" id="GO:0060721">
    <property type="term" value="P:regulation of spongiotrophoblast cell proliferation"/>
    <property type="evidence" value="ECO:0000315"/>
    <property type="project" value="MGI"/>
</dbReference>
<dbReference type="FunFam" id="3.30.200.20:FF:000355">
    <property type="entry name" value="Nik related kinase"/>
    <property type="match status" value="1"/>
</dbReference>
<dbReference type="FunFam" id="1.10.510.10:FF:000435">
    <property type="entry name" value="Nik-related protein kinase"/>
    <property type="match status" value="1"/>
</dbReference>
<dbReference type="Gene3D" id="3.30.200.20">
    <property type="entry name" value="Phosphorylase Kinase, domain 1"/>
    <property type="match status" value="1"/>
</dbReference>
<dbReference type="Gene3D" id="1.10.510.10">
    <property type="entry name" value="Transferase(Phosphotransferase) domain 1"/>
    <property type="match status" value="1"/>
</dbReference>
<dbReference type="InterPro" id="IPR001180">
    <property type="entry name" value="CNH_dom"/>
</dbReference>
<dbReference type="InterPro" id="IPR011009">
    <property type="entry name" value="Kinase-like_dom_sf"/>
</dbReference>
<dbReference type="InterPro" id="IPR000719">
    <property type="entry name" value="Prot_kinase_dom"/>
</dbReference>
<dbReference type="InterPro" id="IPR017441">
    <property type="entry name" value="Protein_kinase_ATP_BS"/>
</dbReference>
<dbReference type="InterPro" id="IPR008271">
    <property type="entry name" value="Ser/Thr_kinase_AS"/>
</dbReference>
<dbReference type="InterPro" id="IPR051700">
    <property type="entry name" value="STE20_Ser-Thr_kinase"/>
</dbReference>
<dbReference type="PANTHER" id="PTHR47096">
    <property type="entry name" value="MISSHAPEN LIKE KINASE 1"/>
    <property type="match status" value="1"/>
</dbReference>
<dbReference type="PANTHER" id="PTHR47096:SF2">
    <property type="entry name" value="NIK-RELATED PROTEIN KINASE"/>
    <property type="match status" value="1"/>
</dbReference>
<dbReference type="Pfam" id="PF00780">
    <property type="entry name" value="CNH"/>
    <property type="match status" value="1"/>
</dbReference>
<dbReference type="Pfam" id="PF00069">
    <property type="entry name" value="Pkinase"/>
    <property type="match status" value="1"/>
</dbReference>
<dbReference type="SMART" id="SM00036">
    <property type="entry name" value="CNH"/>
    <property type="match status" value="1"/>
</dbReference>
<dbReference type="SMART" id="SM00220">
    <property type="entry name" value="S_TKc"/>
    <property type="match status" value="1"/>
</dbReference>
<dbReference type="SUPFAM" id="SSF56112">
    <property type="entry name" value="Protein kinase-like (PK-like)"/>
    <property type="match status" value="1"/>
</dbReference>
<dbReference type="PROSITE" id="PS50219">
    <property type="entry name" value="CNH"/>
    <property type="match status" value="1"/>
</dbReference>
<dbReference type="PROSITE" id="PS00107">
    <property type="entry name" value="PROTEIN_KINASE_ATP"/>
    <property type="match status" value="1"/>
</dbReference>
<dbReference type="PROSITE" id="PS50011">
    <property type="entry name" value="PROTEIN_KINASE_DOM"/>
    <property type="match status" value="1"/>
</dbReference>
<dbReference type="PROSITE" id="PS00108">
    <property type="entry name" value="PROTEIN_KINASE_ST"/>
    <property type="match status" value="1"/>
</dbReference>
<feature type="chain" id="PRO_0000250512" description="Nik-related protein kinase">
    <location>
        <begin position="1"/>
        <end position="1455"/>
    </location>
</feature>
<feature type="domain" description="Protein kinase" evidence="3">
    <location>
        <begin position="25"/>
        <end position="313"/>
    </location>
</feature>
<feature type="domain" description="CNH" evidence="4">
    <location>
        <begin position="1138"/>
        <end position="1425"/>
    </location>
</feature>
<feature type="region of interest" description="Disordered" evidence="6">
    <location>
        <begin position="385"/>
        <end position="404"/>
    </location>
</feature>
<feature type="region of interest" description="Disordered" evidence="6">
    <location>
        <begin position="471"/>
        <end position="568"/>
    </location>
</feature>
<feature type="region of interest" description="Disordered" evidence="6">
    <location>
        <begin position="760"/>
        <end position="854"/>
    </location>
</feature>
<feature type="region of interest" description="Disordered" evidence="6">
    <location>
        <begin position="1029"/>
        <end position="1080"/>
    </location>
</feature>
<feature type="coiled-coil region" evidence="2">
    <location>
        <begin position="716"/>
        <end position="750"/>
    </location>
</feature>
<feature type="compositionally biased region" description="Polar residues" evidence="6">
    <location>
        <begin position="471"/>
        <end position="480"/>
    </location>
</feature>
<feature type="compositionally biased region" description="Basic and acidic residues" evidence="6">
    <location>
        <begin position="494"/>
        <end position="505"/>
    </location>
</feature>
<feature type="compositionally biased region" description="Low complexity" evidence="6">
    <location>
        <begin position="520"/>
        <end position="531"/>
    </location>
</feature>
<feature type="compositionally biased region" description="Acidic residues" evidence="6">
    <location>
        <begin position="540"/>
        <end position="568"/>
    </location>
</feature>
<feature type="compositionally biased region" description="Low complexity" evidence="6">
    <location>
        <begin position="1029"/>
        <end position="1038"/>
    </location>
</feature>
<feature type="compositionally biased region" description="Basic and acidic residues" evidence="6">
    <location>
        <begin position="1044"/>
        <end position="1078"/>
    </location>
</feature>
<feature type="active site" description="Proton acceptor" evidence="3 5">
    <location>
        <position position="177"/>
    </location>
</feature>
<feature type="binding site" evidence="3">
    <location>
        <begin position="31"/>
        <end position="39"/>
    </location>
    <ligand>
        <name>ATP</name>
        <dbReference type="ChEBI" id="CHEBI:30616"/>
    </ligand>
</feature>
<feature type="binding site" evidence="3">
    <location>
        <position position="54"/>
    </location>
    <ligand>
        <name>ATP</name>
        <dbReference type="ChEBI" id="CHEBI:30616"/>
    </ligand>
</feature>
<feature type="modified residue" description="Phosphoserine" evidence="1">
    <location>
        <position position="847"/>
    </location>
</feature>
<feature type="modified residue" description="Phosphoserine" evidence="11">
    <location>
        <position position="850"/>
    </location>
</feature>
<feature type="mutagenesis site" description="Kinase inactivation." evidence="8 9">
    <original>K</original>
    <variation>E</variation>
    <location>
        <position position="54"/>
    </location>
</feature>
<feature type="sequence conflict" description="In Ref. 1; BAA84943." evidence="10" ref="1">
    <original>A</original>
    <variation>V</variation>
    <location>
        <position position="274"/>
    </location>
</feature>
<feature type="sequence conflict" description="In Ref. 1; BAA84943." evidence="10" ref="1">
    <original>D</original>
    <variation>N</variation>
    <location>
        <position position="397"/>
    </location>
</feature>
<feature type="sequence conflict" description="In Ref. 2; BAA87066." evidence="10" ref="2">
    <original>K</original>
    <variation>R</variation>
    <location>
        <position position="467"/>
    </location>
</feature>
<feature type="sequence conflict" description="In Ref. 3; AAH68311." evidence="10" ref="3">
    <original>I</original>
    <variation>T</variation>
    <location>
        <position position="894"/>
    </location>
</feature>
<feature type="sequence conflict" description="In Ref. 3; AAH68311." evidence="10" ref="3">
    <original>F</original>
    <variation>S</variation>
    <location>
        <position position="1008"/>
    </location>
</feature>
<name>NRK_MOUSE</name>
<accession>Q9R0G8</accession>
<accession>B2RSW5</accession>
<accession>Q6NV55</accession>
<accession>Q8C9S9</accession>
<accession>Q9R0S4</accession>
<keyword id="KW-0067">ATP-binding</keyword>
<keyword id="KW-0175">Coiled coil</keyword>
<keyword id="KW-0418">Kinase</keyword>
<keyword id="KW-0547">Nucleotide-binding</keyword>
<keyword id="KW-0597">Phosphoprotein</keyword>
<keyword id="KW-1185">Reference proteome</keyword>
<keyword id="KW-0723">Serine/threonine-protein kinase</keyword>
<keyword id="KW-0808">Transferase</keyword>
<gene>
    <name type="primary">Nrk</name>
    <name type="synonym">Nesk</name>
</gene>
<reference key="1">
    <citation type="journal article" date="1999" name="Mech. Dev.">
        <title>Nrk: a murine X-linked NIK (Nck-interacting kinase)-related kinase gene expressed in skeletal muscle.</title>
        <authorList>
            <person name="Kanai-Azuma M."/>
            <person name="Kanai Y."/>
            <person name="Okamoto M."/>
            <person name="Hayashi Y."/>
            <person name="Yonekawa H."/>
            <person name="Yazaki K."/>
        </authorList>
    </citation>
    <scope>NUCLEOTIDE SEQUENCE [MRNA]</scope>
    <scope>DEVELOPMENTAL STAGE</scope>
    <source>
        <strain>BALB/cJ</strain>
        <tissue>Embryo</tissue>
    </source>
</reference>
<reference key="2">
    <citation type="journal article" date="2000" name="J. Biol. Chem.">
        <title>NESK, a member of the germinal center kinase family that activates the c-Jun N-terminal kinase pathway and is expressed during the late stages of embryogenesis.</title>
        <authorList>
            <person name="Nakano K."/>
            <person name="Yamauchi J."/>
            <person name="Nakagawa K."/>
            <person name="Itoh H."/>
            <person name="Kitamura N."/>
        </authorList>
    </citation>
    <scope>NUCLEOTIDE SEQUENCE [MRNA]</scope>
    <scope>MUTAGENESIS OF LYS-54</scope>
    <scope>FUNCTION</scope>
    <scope>DEVELOPMENTAL STAGE</scope>
    <source>
        <tissue>Embryo</tissue>
    </source>
</reference>
<reference key="3">
    <citation type="journal article" date="2004" name="Genome Res.">
        <title>The status, quality, and expansion of the NIH full-length cDNA project: the Mammalian Gene Collection (MGC).</title>
        <authorList>
            <consortium name="The MGC Project Team"/>
        </authorList>
    </citation>
    <scope>NUCLEOTIDE SEQUENCE [LARGE SCALE MRNA]</scope>
    <source>
        <strain>C57BL/6J</strain>
        <tissue>Brain</tissue>
        <tissue>Embryo</tissue>
    </source>
</reference>
<reference key="4">
    <citation type="journal article" date="2005" name="Science">
        <title>The transcriptional landscape of the mammalian genome.</title>
        <authorList>
            <person name="Carninci P."/>
            <person name="Kasukawa T."/>
            <person name="Katayama S."/>
            <person name="Gough J."/>
            <person name="Frith M.C."/>
            <person name="Maeda N."/>
            <person name="Oyama R."/>
            <person name="Ravasi T."/>
            <person name="Lenhard B."/>
            <person name="Wells C."/>
            <person name="Kodzius R."/>
            <person name="Shimokawa K."/>
            <person name="Bajic V.B."/>
            <person name="Brenner S.E."/>
            <person name="Batalov S."/>
            <person name="Forrest A.R."/>
            <person name="Zavolan M."/>
            <person name="Davis M.J."/>
            <person name="Wilming L.G."/>
            <person name="Aidinis V."/>
            <person name="Allen J.E."/>
            <person name="Ambesi-Impiombato A."/>
            <person name="Apweiler R."/>
            <person name="Aturaliya R.N."/>
            <person name="Bailey T.L."/>
            <person name="Bansal M."/>
            <person name="Baxter L."/>
            <person name="Beisel K.W."/>
            <person name="Bersano T."/>
            <person name="Bono H."/>
            <person name="Chalk A.M."/>
            <person name="Chiu K.P."/>
            <person name="Choudhary V."/>
            <person name="Christoffels A."/>
            <person name="Clutterbuck D.R."/>
            <person name="Crowe M.L."/>
            <person name="Dalla E."/>
            <person name="Dalrymple B.P."/>
            <person name="de Bono B."/>
            <person name="Della Gatta G."/>
            <person name="di Bernardo D."/>
            <person name="Down T."/>
            <person name="Engstrom P."/>
            <person name="Fagiolini M."/>
            <person name="Faulkner G."/>
            <person name="Fletcher C.F."/>
            <person name="Fukushima T."/>
            <person name="Furuno M."/>
            <person name="Futaki S."/>
            <person name="Gariboldi M."/>
            <person name="Georgii-Hemming P."/>
            <person name="Gingeras T.R."/>
            <person name="Gojobori T."/>
            <person name="Green R.E."/>
            <person name="Gustincich S."/>
            <person name="Harbers M."/>
            <person name="Hayashi Y."/>
            <person name="Hensch T.K."/>
            <person name="Hirokawa N."/>
            <person name="Hill D."/>
            <person name="Huminiecki L."/>
            <person name="Iacono M."/>
            <person name="Ikeo K."/>
            <person name="Iwama A."/>
            <person name="Ishikawa T."/>
            <person name="Jakt M."/>
            <person name="Kanapin A."/>
            <person name="Katoh M."/>
            <person name="Kawasawa Y."/>
            <person name="Kelso J."/>
            <person name="Kitamura H."/>
            <person name="Kitano H."/>
            <person name="Kollias G."/>
            <person name="Krishnan S.P."/>
            <person name="Kruger A."/>
            <person name="Kummerfeld S.K."/>
            <person name="Kurochkin I.V."/>
            <person name="Lareau L.F."/>
            <person name="Lazarevic D."/>
            <person name="Lipovich L."/>
            <person name="Liu J."/>
            <person name="Liuni S."/>
            <person name="McWilliam S."/>
            <person name="Madan Babu M."/>
            <person name="Madera M."/>
            <person name="Marchionni L."/>
            <person name="Matsuda H."/>
            <person name="Matsuzawa S."/>
            <person name="Miki H."/>
            <person name="Mignone F."/>
            <person name="Miyake S."/>
            <person name="Morris K."/>
            <person name="Mottagui-Tabar S."/>
            <person name="Mulder N."/>
            <person name="Nakano N."/>
            <person name="Nakauchi H."/>
            <person name="Ng P."/>
            <person name="Nilsson R."/>
            <person name="Nishiguchi S."/>
            <person name="Nishikawa S."/>
            <person name="Nori F."/>
            <person name="Ohara O."/>
            <person name="Okazaki Y."/>
            <person name="Orlando V."/>
            <person name="Pang K.C."/>
            <person name="Pavan W.J."/>
            <person name="Pavesi G."/>
            <person name="Pesole G."/>
            <person name="Petrovsky N."/>
            <person name="Piazza S."/>
            <person name="Reed J."/>
            <person name="Reid J.F."/>
            <person name="Ring B.Z."/>
            <person name="Ringwald M."/>
            <person name="Rost B."/>
            <person name="Ruan Y."/>
            <person name="Salzberg S.L."/>
            <person name="Sandelin A."/>
            <person name="Schneider C."/>
            <person name="Schoenbach C."/>
            <person name="Sekiguchi K."/>
            <person name="Semple C.A."/>
            <person name="Seno S."/>
            <person name="Sessa L."/>
            <person name="Sheng Y."/>
            <person name="Shibata Y."/>
            <person name="Shimada H."/>
            <person name="Shimada K."/>
            <person name="Silva D."/>
            <person name="Sinclair B."/>
            <person name="Sperling S."/>
            <person name="Stupka E."/>
            <person name="Sugiura K."/>
            <person name="Sultana R."/>
            <person name="Takenaka Y."/>
            <person name="Taki K."/>
            <person name="Tammoja K."/>
            <person name="Tan S.L."/>
            <person name="Tang S."/>
            <person name="Taylor M.S."/>
            <person name="Tegner J."/>
            <person name="Teichmann S.A."/>
            <person name="Ueda H.R."/>
            <person name="van Nimwegen E."/>
            <person name="Verardo R."/>
            <person name="Wei C.L."/>
            <person name="Yagi K."/>
            <person name="Yamanishi H."/>
            <person name="Zabarovsky E."/>
            <person name="Zhu S."/>
            <person name="Zimmer A."/>
            <person name="Hide W."/>
            <person name="Bult C."/>
            <person name="Grimmond S.M."/>
            <person name="Teasdale R.D."/>
            <person name="Liu E.T."/>
            <person name="Brusic V."/>
            <person name="Quackenbush J."/>
            <person name="Wahlestedt C."/>
            <person name="Mattick J.S."/>
            <person name="Hume D.A."/>
            <person name="Kai C."/>
            <person name="Sasaki D."/>
            <person name="Tomaru Y."/>
            <person name="Fukuda S."/>
            <person name="Kanamori-Katayama M."/>
            <person name="Suzuki M."/>
            <person name="Aoki J."/>
            <person name="Arakawa T."/>
            <person name="Iida J."/>
            <person name="Imamura K."/>
            <person name="Itoh M."/>
            <person name="Kato T."/>
            <person name="Kawaji H."/>
            <person name="Kawagashira N."/>
            <person name="Kawashima T."/>
            <person name="Kojima M."/>
            <person name="Kondo S."/>
            <person name="Konno H."/>
            <person name="Nakano K."/>
            <person name="Ninomiya N."/>
            <person name="Nishio T."/>
            <person name="Okada M."/>
            <person name="Plessy C."/>
            <person name="Shibata K."/>
            <person name="Shiraki T."/>
            <person name="Suzuki S."/>
            <person name="Tagami M."/>
            <person name="Waki K."/>
            <person name="Watahiki A."/>
            <person name="Okamura-Oho Y."/>
            <person name="Suzuki H."/>
            <person name="Kawai J."/>
            <person name="Hayashizaki Y."/>
        </authorList>
    </citation>
    <scope>NUCLEOTIDE SEQUENCE [LARGE SCALE MRNA] OF 1-334</scope>
    <source>
        <strain>C57BL/6J</strain>
        <tissue>Thymus</tissue>
    </source>
</reference>
<reference key="5">
    <citation type="journal article" date="2003" name="Exp. Cell Res.">
        <title>Cofilin phosphorylation and actin polymerization by NRK/NESK, a member of the germinal center kinase family.</title>
        <authorList>
            <person name="Nakano K."/>
            <person name="Kanai-Azuma M."/>
            <person name="Kanai Y."/>
            <person name="Moriyama K."/>
            <person name="Yazaki K."/>
            <person name="Hayashi Y."/>
            <person name="Kitamura N."/>
        </authorList>
    </citation>
    <scope>FUNCTION</scope>
    <scope>MUTAGENESIS OF LYS-54</scope>
    <scope>DEVELOPMENTAL STAGE</scope>
</reference>
<reference key="6">
    <citation type="journal article" date="2010" name="Cell">
        <title>A tissue-specific atlas of mouse protein phosphorylation and expression.</title>
        <authorList>
            <person name="Huttlin E.L."/>
            <person name="Jedrychowski M.P."/>
            <person name="Elias J.E."/>
            <person name="Goswami T."/>
            <person name="Rad R."/>
            <person name="Beausoleil S.A."/>
            <person name="Villen J."/>
            <person name="Haas W."/>
            <person name="Sowa M.E."/>
            <person name="Gygi S.P."/>
        </authorList>
    </citation>
    <scope>PHOSPHORYLATION [LARGE SCALE ANALYSIS] AT SER-850</scope>
    <scope>IDENTIFICATION BY MASS SPECTROMETRY [LARGE SCALE ANALYSIS]</scope>
    <source>
        <tissue>Testis</tissue>
    </source>
</reference>
<sequence length="1455" mass="163647">MAGPGSWRDKEVTDLGQLPDPTGIFSLDKAIGLGTYGRIFLGIHEKTGSLVAVKVMSARKTPLPEIGRRVRVNKYQKSVGWRYSDEEEDLRTELNLLRKYSFHKNIVTFYGAFFKLNPPGHQHQLWMVMELCAAGSVTDVVRMTRNQSLKEDWIAYICREILQGLAHLHAHQVIHRDIKGQNVLLTHDAEVKIVDFGVSAQVSRTNGRRNSFIGTPYWMAPEVIHCDEDPRCSYDYRSDVWSVGITAIEMAEGAPPLCKLQPLEALCVILREAAPKVKSSGWSRKFQNFMENCMIKNFLFRPTSGNMLLHPFVHDIKNERRVVESLTKHLTGIIQKREKKGIPVAFEGEEAAKEQYITRRFRGPSCTPELLRVPTSSRCRPLRVLHGEPPQPRWLPDQEDPQDQELQQLQKAAGVFMPLHSQDNTSKLFPKQVEVAPYLRGAAQVVMPVLVQVEAPPQVSKAAQMLKSLPTQDNKATSPEVQAPVAEGQQAQHEALETEQPKDLDQVPEEFQGQDRAPEQPRQGQAAEQQQIHNPVPEQPPEEDREPEQAEVQEEAVEPPQAEIEDKEPEVVQVHAQVLLPLLSQNRHVLLPLHLDRQLLIPVGEQNEEVPRAQAWDLEASRAVGAVQALIEGLSRDLLRAPNAFVTKPLGPLQIFLENLSTDGFYTEPEPTQKKKSKVASLRKAIAKRLRPKRFRAKALWRLEDFEFSDVETSRRRRHRRWEDIFNQHEEQLRRVENDREDDSSDNDEVFHSIQAEVQIEPHAANPAGNEVHERSAPMPCNRNRTHRVKFSPSVGEEEPSLEEAQPQQQQQQPMNIRPRNCLNPQNFQAQSDSSSEEDSPVTRRKSQSSPPYSTIDQKLLIDIHVPDGFKVGKISPPVYLTNEWVGYNALSEIFWDDWIMPTRPARPPEEDGDYVELYDADANANGDEEVANGAYEDPRDGANGHDDMNNQLDQANGYEGHGAAGYNGGDVGGNHGAAFNGPRANYPRAGILKNGHNDGRALNRGAFGVFGDNAARAFHGAAGEAGAAFGNHGANRGNGRGNRNREANGRNEENGAFGRDQHVFPEFEHEESDRGTETSDSIALEITSFDGEQNSGRPVSSTTMGFPIGRSSPRGSDFGSDISYNSPILHVYEKDFSSEVYCGSLWGVNLLLGTQSHLYLMDRSGKAEIVKLIKRRPFRQIQVVEQLNLLITISGKKNRLRVYHLSWLRNKILNNDPKSKKRQKAMRKKEEACKAIDKLIGCEHFSVLQHEETTYIAVAVKSSIHLFAWAPKSFDENTAIKVFPTRDLKPLTVDLAVGSEKTLKIFFSSANGYHIIDAESEVMSEVTLPNNNVVILPDCLGLGVMLSLNAEAASEEANEQLLKKILDVWKDIPSSVAFECTKRITGWDQKAIEVRSLQSTILENELKRRSIKKLRFLCARGDKMFFASTLSNDHSRVYLMSLGKLEELHRSYAV</sequence>